<sequence length="302" mass="34751">MTSNEKEMGKSELLVVTGMSGAGKSLVIQSLEDMGFFCVDNLPPVLLPKFVELMAQGNPSLQKVAIAIDLRGKELFKSLVKEIDIIKSRNDVILDVMFLEAKTEKIISRYKESRRAHPLNEQGQRSLIDAINEEREHLSEIRSIANYVIDTTKLKPKELKQRISKFYLDENFETFTINVTSFGFKHGIQMDADLVFDVRFLPNPYYVEELRPFTGLDEPVYNYVMKWKETQIFFDKLTDLLKFMIPGYKKEGKSQLVIAIGCTGGQHRSVALAKRLAEYLNEIFEYNVYVHHRDAHIESGER</sequence>
<protein>
    <recommendedName>
        <fullName evidence="1">Nucleotide-binding protein SE_0548</fullName>
    </recommendedName>
</protein>
<name>Y548_STAES</name>
<evidence type="ECO:0000255" key="1">
    <source>
        <dbReference type="HAMAP-Rule" id="MF_00636"/>
    </source>
</evidence>
<proteinExistence type="inferred from homology"/>
<dbReference type="EMBL" id="AE015929">
    <property type="protein sequence ID" value="AAO04145.1"/>
    <property type="molecule type" value="Genomic_DNA"/>
</dbReference>
<dbReference type="RefSeq" id="NP_764103.1">
    <property type="nucleotide sequence ID" value="NC_004461.1"/>
</dbReference>
<dbReference type="SMR" id="Q8CTE3"/>
<dbReference type="KEGG" id="sep:SE_0548"/>
<dbReference type="PATRIC" id="fig|176280.10.peg.519"/>
<dbReference type="eggNOG" id="COG1660">
    <property type="taxonomic scope" value="Bacteria"/>
</dbReference>
<dbReference type="HOGENOM" id="CLU_059558_0_0_9"/>
<dbReference type="OrthoDB" id="9784461at2"/>
<dbReference type="Proteomes" id="UP000001411">
    <property type="component" value="Chromosome"/>
</dbReference>
<dbReference type="GO" id="GO:0005524">
    <property type="term" value="F:ATP binding"/>
    <property type="evidence" value="ECO:0007669"/>
    <property type="project" value="UniProtKB-UniRule"/>
</dbReference>
<dbReference type="GO" id="GO:0005525">
    <property type="term" value="F:GTP binding"/>
    <property type="evidence" value="ECO:0007669"/>
    <property type="project" value="UniProtKB-UniRule"/>
</dbReference>
<dbReference type="Gene3D" id="3.40.50.300">
    <property type="entry name" value="P-loop containing nucleotide triphosphate hydrolases"/>
    <property type="match status" value="1"/>
</dbReference>
<dbReference type="HAMAP" id="MF_00636">
    <property type="entry name" value="RapZ_like"/>
    <property type="match status" value="1"/>
</dbReference>
<dbReference type="InterPro" id="IPR027417">
    <property type="entry name" value="P-loop_NTPase"/>
</dbReference>
<dbReference type="InterPro" id="IPR005337">
    <property type="entry name" value="RapZ-like"/>
</dbReference>
<dbReference type="InterPro" id="IPR053930">
    <property type="entry name" value="RapZ-like_N"/>
</dbReference>
<dbReference type="InterPro" id="IPR053931">
    <property type="entry name" value="RapZ_C"/>
</dbReference>
<dbReference type="NCBIfam" id="NF003828">
    <property type="entry name" value="PRK05416.1"/>
    <property type="match status" value="1"/>
</dbReference>
<dbReference type="PANTHER" id="PTHR30448">
    <property type="entry name" value="RNASE ADAPTER PROTEIN RAPZ"/>
    <property type="match status" value="1"/>
</dbReference>
<dbReference type="PANTHER" id="PTHR30448:SF0">
    <property type="entry name" value="RNASE ADAPTER PROTEIN RAPZ"/>
    <property type="match status" value="1"/>
</dbReference>
<dbReference type="Pfam" id="PF22740">
    <property type="entry name" value="PapZ_C"/>
    <property type="match status" value="1"/>
</dbReference>
<dbReference type="Pfam" id="PF03668">
    <property type="entry name" value="RapZ-like_N"/>
    <property type="match status" value="1"/>
</dbReference>
<dbReference type="PIRSF" id="PIRSF005052">
    <property type="entry name" value="P-loopkin"/>
    <property type="match status" value="1"/>
</dbReference>
<dbReference type="SUPFAM" id="SSF52540">
    <property type="entry name" value="P-loop containing nucleoside triphosphate hydrolases"/>
    <property type="match status" value="1"/>
</dbReference>
<reference key="1">
    <citation type="journal article" date="2003" name="Mol. Microbiol.">
        <title>Genome-based analysis of virulence genes in a non-biofilm-forming Staphylococcus epidermidis strain (ATCC 12228).</title>
        <authorList>
            <person name="Zhang Y.-Q."/>
            <person name="Ren S.-X."/>
            <person name="Li H.-L."/>
            <person name="Wang Y.-X."/>
            <person name="Fu G."/>
            <person name="Yang J."/>
            <person name="Qin Z.-Q."/>
            <person name="Miao Y.-G."/>
            <person name="Wang W.-Y."/>
            <person name="Chen R.-S."/>
            <person name="Shen Y."/>
            <person name="Chen Z."/>
            <person name="Yuan Z.-H."/>
            <person name="Zhao G.-P."/>
            <person name="Qu D."/>
            <person name="Danchin A."/>
            <person name="Wen Y.-M."/>
        </authorList>
    </citation>
    <scope>NUCLEOTIDE SEQUENCE [LARGE SCALE GENOMIC DNA]</scope>
    <source>
        <strain>ATCC 12228 / FDA PCI 1200</strain>
    </source>
</reference>
<organism>
    <name type="scientific">Staphylococcus epidermidis (strain ATCC 12228 / FDA PCI 1200)</name>
    <dbReference type="NCBI Taxonomy" id="176280"/>
    <lineage>
        <taxon>Bacteria</taxon>
        <taxon>Bacillati</taxon>
        <taxon>Bacillota</taxon>
        <taxon>Bacilli</taxon>
        <taxon>Bacillales</taxon>
        <taxon>Staphylococcaceae</taxon>
        <taxon>Staphylococcus</taxon>
    </lineage>
</organism>
<accession>Q8CTE3</accession>
<comment type="function">
    <text evidence="1">Displays ATPase and GTPase activities.</text>
</comment>
<comment type="similarity">
    <text evidence="1">Belongs to the RapZ-like family.</text>
</comment>
<feature type="chain" id="PRO_0000107763" description="Nucleotide-binding protein SE_0548">
    <location>
        <begin position="1"/>
        <end position="302"/>
    </location>
</feature>
<feature type="binding site" evidence="1">
    <location>
        <begin position="18"/>
        <end position="25"/>
    </location>
    <ligand>
        <name>ATP</name>
        <dbReference type="ChEBI" id="CHEBI:30616"/>
    </ligand>
</feature>
<feature type="binding site" evidence="1">
    <location>
        <begin position="69"/>
        <end position="72"/>
    </location>
    <ligand>
        <name>GTP</name>
        <dbReference type="ChEBI" id="CHEBI:37565"/>
    </ligand>
</feature>
<gene>
    <name type="ordered locus">SE_0548</name>
</gene>
<keyword id="KW-0067">ATP-binding</keyword>
<keyword id="KW-0342">GTP-binding</keyword>
<keyword id="KW-0547">Nucleotide-binding</keyword>